<evidence type="ECO:0000255" key="1">
    <source>
        <dbReference type="HAMAP-Rule" id="MF_01366"/>
    </source>
</evidence>
<evidence type="ECO:0000305" key="2"/>
<protein>
    <recommendedName>
        <fullName evidence="1">Large ribosomal subunit protein uL13</fullName>
    </recommendedName>
    <alternativeName>
        <fullName evidence="2">50S ribosomal protein L13</fullName>
    </alternativeName>
</protein>
<accession>Q5PJS5</accession>
<comment type="function">
    <text evidence="1">This protein is one of the early assembly proteins of the 50S ribosomal subunit, although it is not seen to bind rRNA by itself. It is important during the early stages of 50S assembly.</text>
</comment>
<comment type="subunit">
    <text evidence="1">Part of the 50S ribosomal subunit.</text>
</comment>
<comment type="similarity">
    <text evidence="1">Belongs to the universal ribosomal protein uL13 family.</text>
</comment>
<keyword id="KW-0687">Ribonucleoprotein</keyword>
<keyword id="KW-0689">Ribosomal protein</keyword>
<sequence>MKTFTAKPETVKRDWYVVDATGKTLGRLATELARRLRGKHKAEYTPHVDTGDYIIVLNADKVAVTGNKRTDKVYYHHTGHIGGIKQATFEEMIARRPERVIEIAVKGMLPKGPLGRAMFRKLKVYAGNEHNHAAQQPQVLDI</sequence>
<feature type="chain" id="PRO_0000261792" description="Large ribosomal subunit protein uL13">
    <location>
        <begin position="1"/>
        <end position="142"/>
    </location>
</feature>
<proteinExistence type="inferred from homology"/>
<name>RL13_SALPA</name>
<gene>
    <name evidence="1" type="primary">rplM</name>
    <name type="ordered locus">SPA3212</name>
</gene>
<dbReference type="EMBL" id="CP000026">
    <property type="protein sequence ID" value="AAV79036.1"/>
    <property type="molecule type" value="Genomic_DNA"/>
</dbReference>
<dbReference type="RefSeq" id="WP_000847559.1">
    <property type="nucleotide sequence ID" value="NC_006511.1"/>
</dbReference>
<dbReference type="SMR" id="Q5PJS5"/>
<dbReference type="GeneID" id="89518067"/>
<dbReference type="KEGG" id="spt:SPA3212"/>
<dbReference type="HOGENOM" id="CLU_082184_2_2_6"/>
<dbReference type="Proteomes" id="UP000008185">
    <property type="component" value="Chromosome"/>
</dbReference>
<dbReference type="GO" id="GO:0022625">
    <property type="term" value="C:cytosolic large ribosomal subunit"/>
    <property type="evidence" value="ECO:0007669"/>
    <property type="project" value="TreeGrafter"/>
</dbReference>
<dbReference type="GO" id="GO:0003729">
    <property type="term" value="F:mRNA binding"/>
    <property type="evidence" value="ECO:0007669"/>
    <property type="project" value="TreeGrafter"/>
</dbReference>
<dbReference type="GO" id="GO:0003735">
    <property type="term" value="F:structural constituent of ribosome"/>
    <property type="evidence" value="ECO:0007669"/>
    <property type="project" value="InterPro"/>
</dbReference>
<dbReference type="GO" id="GO:0017148">
    <property type="term" value="P:negative regulation of translation"/>
    <property type="evidence" value="ECO:0007669"/>
    <property type="project" value="TreeGrafter"/>
</dbReference>
<dbReference type="GO" id="GO:0006412">
    <property type="term" value="P:translation"/>
    <property type="evidence" value="ECO:0007669"/>
    <property type="project" value="UniProtKB-UniRule"/>
</dbReference>
<dbReference type="CDD" id="cd00392">
    <property type="entry name" value="Ribosomal_L13"/>
    <property type="match status" value="1"/>
</dbReference>
<dbReference type="FunFam" id="3.90.1180.10:FF:000001">
    <property type="entry name" value="50S ribosomal protein L13"/>
    <property type="match status" value="1"/>
</dbReference>
<dbReference type="Gene3D" id="3.90.1180.10">
    <property type="entry name" value="Ribosomal protein L13"/>
    <property type="match status" value="1"/>
</dbReference>
<dbReference type="HAMAP" id="MF_01366">
    <property type="entry name" value="Ribosomal_uL13"/>
    <property type="match status" value="1"/>
</dbReference>
<dbReference type="InterPro" id="IPR005822">
    <property type="entry name" value="Ribosomal_uL13"/>
</dbReference>
<dbReference type="InterPro" id="IPR005823">
    <property type="entry name" value="Ribosomal_uL13_bac-type"/>
</dbReference>
<dbReference type="InterPro" id="IPR023563">
    <property type="entry name" value="Ribosomal_uL13_CS"/>
</dbReference>
<dbReference type="InterPro" id="IPR036899">
    <property type="entry name" value="Ribosomal_uL13_sf"/>
</dbReference>
<dbReference type="NCBIfam" id="TIGR01066">
    <property type="entry name" value="rplM_bact"/>
    <property type="match status" value="1"/>
</dbReference>
<dbReference type="PANTHER" id="PTHR11545:SF2">
    <property type="entry name" value="LARGE RIBOSOMAL SUBUNIT PROTEIN UL13M"/>
    <property type="match status" value="1"/>
</dbReference>
<dbReference type="PANTHER" id="PTHR11545">
    <property type="entry name" value="RIBOSOMAL PROTEIN L13"/>
    <property type="match status" value="1"/>
</dbReference>
<dbReference type="Pfam" id="PF00572">
    <property type="entry name" value="Ribosomal_L13"/>
    <property type="match status" value="1"/>
</dbReference>
<dbReference type="PIRSF" id="PIRSF002181">
    <property type="entry name" value="Ribosomal_L13"/>
    <property type="match status" value="1"/>
</dbReference>
<dbReference type="SUPFAM" id="SSF52161">
    <property type="entry name" value="Ribosomal protein L13"/>
    <property type="match status" value="1"/>
</dbReference>
<dbReference type="PROSITE" id="PS00783">
    <property type="entry name" value="RIBOSOMAL_L13"/>
    <property type="match status" value="1"/>
</dbReference>
<reference key="1">
    <citation type="journal article" date="2004" name="Nat. Genet.">
        <title>Comparison of genome degradation in Paratyphi A and Typhi, human-restricted serovars of Salmonella enterica that cause typhoid.</title>
        <authorList>
            <person name="McClelland M."/>
            <person name="Sanderson K.E."/>
            <person name="Clifton S.W."/>
            <person name="Latreille P."/>
            <person name="Porwollik S."/>
            <person name="Sabo A."/>
            <person name="Meyer R."/>
            <person name="Bieri T."/>
            <person name="Ozersky P."/>
            <person name="McLellan M."/>
            <person name="Harkins C.R."/>
            <person name="Wang C."/>
            <person name="Nguyen C."/>
            <person name="Berghoff A."/>
            <person name="Elliott G."/>
            <person name="Kohlberg S."/>
            <person name="Strong C."/>
            <person name="Du F."/>
            <person name="Carter J."/>
            <person name="Kremizki C."/>
            <person name="Layman D."/>
            <person name="Leonard S."/>
            <person name="Sun H."/>
            <person name="Fulton L."/>
            <person name="Nash W."/>
            <person name="Miner T."/>
            <person name="Minx P."/>
            <person name="Delehaunty K."/>
            <person name="Fronick C."/>
            <person name="Magrini V."/>
            <person name="Nhan M."/>
            <person name="Warren W."/>
            <person name="Florea L."/>
            <person name="Spieth J."/>
            <person name="Wilson R.K."/>
        </authorList>
    </citation>
    <scope>NUCLEOTIDE SEQUENCE [LARGE SCALE GENOMIC DNA]</scope>
    <source>
        <strain>ATCC 9150 / SARB42</strain>
    </source>
</reference>
<organism>
    <name type="scientific">Salmonella paratyphi A (strain ATCC 9150 / SARB42)</name>
    <dbReference type="NCBI Taxonomy" id="295319"/>
    <lineage>
        <taxon>Bacteria</taxon>
        <taxon>Pseudomonadati</taxon>
        <taxon>Pseudomonadota</taxon>
        <taxon>Gammaproteobacteria</taxon>
        <taxon>Enterobacterales</taxon>
        <taxon>Enterobacteriaceae</taxon>
        <taxon>Salmonella</taxon>
    </lineage>
</organism>